<reference key="1">
    <citation type="journal article" date="1998" name="Nature">
        <title>The complete genome of the hyperthermophilic bacterium Aquifex aeolicus.</title>
        <authorList>
            <person name="Deckert G."/>
            <person name="Warren P.V."/>
            <person name="Gaasterland T."/>
            <person name="Young W.G."/>
            <person name="Lenox A.L."/>
            <person name="Graham D.E."/>
            <person name="Overbeek R."/>
            <person name="Snead M.A."/>
            <person name="Keller M."/>
            <person name="Aujay M."/>
            <person name="Huber R."/>
            <person name="Feldman R.A."/>
            <person name="Short J.M."/>
            <person name="Olsen G.J."/>
            <person name="Swanson R.V."/>
        </authorList>
    </citation>
    <scope>NUCLEOTIDE SEQUENCE [LARGE SCALE GENOMIC DNA]</scope>
    <source>
        <strain>VF5</strain>
    </source>
</reference>
<organism>
    <name type="scientific">Aquifex aeolicus (strain VF5)</name>
    <dbReference type="NCBI Taxonomy" id="224324"/>
    <lineage>
        <taxon>Bacteria</taxon>
        <taxon>Pseudomonadati</taxon>
        <taxon>Aquificota</taxon>
        <taxon>Aquificia</taxon>
        <taxon>Aquificales</taxon>
        <taxon>Aquificaceae</taxon>
        <taxon>Aquifex</taxon>
    </lineage>
</organism>
<protein>
    <recommendedName>
        <fullName>Superoxide dismutase [Cu-Zn] 2</fullName>
        <ecNumber>1.15.1.1</ecNumber>
    </recommendedName>
</protein>
<comment type="function">
    <text evidence="1">Destroys radicals which are normally produced within the cells and which are toxic to biological systems.</text>
</comment>
<comment type="catalytic activity">
    <reaction>
        <text>2 superoxide + 2 H(+) = H2O2 + O2</text>
        <dbReference type="Rhea" id="RHEA:20696"/>
        <dbReference type="ChEBI" id="CHEBI:15378"/>
        <dbReference type="ChEBI" id="CHEBI:15379"/>
        <dbReference type="ChEBI" id="CHEBI:16240"/>
        <dbReference type="ChEBI" id="CHEBI:18421"/>
        <dbReference type="EC" id="1.15.1.1"/>
    </reaction>
</comment>
<comment type="cofactor">
    <cofactor evidence="1">
        <name>Cu cation</name>
        <dbReference type="ChEBI" id="CHEBI:23378"/>
    </cofactor>
    <text evidence="1">Binds 1 copper ion per subunit.</text>
</comment>
<comment type="cofactor">
    <cofactor evidence="1">
        <name>Zn(2+)</name>
        <dbReference type="ChEBI" id="CHEBI:29105"/>
    </cofactor>
    <text evidence="1">Binds 1 zinc ion per subunit.</text>
</comment>
<comment type="similarity">
    <text evidence="3">Belongs to the Cu-Zn superoxide dismutase family.</text>
</comment>
<evidence type="ECO:0000250" key="1"/>
<evidence type="ECO:0000255" key="2"/>
<evidence type="ECO:0000305" key="3"/>
<proteinExistence type="inferred from homology"/>
<dbReference type="EC" id="1.15.1.1"/>
<dbReference type="EMBL" id="AE000657">
    <property type="protein sequence ID" value="AAC06553.1"/>
    <property type="molecule type" value="Genomic_DNA"/>
</dbReference>
<dbReference type="PIR" id="F70321">
    <property type="entry name" value="F70321"/>
</dbReference>
<dbReference type="RefSeq" id="NP_213162.1">
    <property type="nucleotide sequence ID" value="NC_000918.1"/>
</dbReference>
<dbReference type="RefSeq" id="WP_010880100.1">
    <property type="nucleotide sequence ID" value="NC_000918.1"/>
</dbReference>
<dbReference type="SMR" id="O66602"/>
<dbReference type="FunCoup" id="O66602">
    <property type="interactions" value="42"/>
</dbReference>
<dbReference type="STRING" id="224324.aq_238"/>
<dbReference type="EnsemblBacteria" id="AAC06553">
    <property type="protein sequence ID" value="AAC06553"/>
    <property type="gene ID" value="aq_238"/>
</dbReference>
<dbReference type="KEGG" id="aae:aq_238"/>
<dbReference type="PATRIC" id="fig|224324.8.peg.194"/>
<dbReference type="eggNOG" id="COG2032">
    <property type="taxonomic scope" value="Bacteria"/>
</dbReference>
<dbReference type="HOGENOM" id="CLU_056632_8_1_0"/>
<dbReference type="InParanoid" id="O66602"/>
<dbReference type="OrthoDB" id="9792957at2"/>
<dbReference type="Proteomes" id="UP000000798">
    <property type="component" value="Chromosome"/>
</dbReference>
<dbReference type="GO" id="GO:0005507">
    <property type="term" value="F:copper ion binding"/>
    <property type="evidence" value="ECO:0000318"/>
    <property type="project" value="GO_Central"/>
</dbReference>
<dbReference type="GO" id="GO:0004784">
    <property type="term" value="F:superoxide dismutase activity"/>
    <property type="evidence" value="ECO:0000318"/>
    <property type="project" value="GO_Central"/>
</dbReference>
<dbReference type="GO" id="GO:0019430">
    <property type="term" value="P:removal of superoxide radicals"/>
    <property type="evidence" value="ECO:0000318"/>
    <property type="project" value="GO_Central"/>
</dbReference>
<dbReference type="CDD" id="cd00305">
    <property type="entry name" value="Cu-Zn_Superoxide_Dismutase"/>
    <property type="match status" value="1"/>
</dbReference>
<dbReference type="FunFam" id="2.60.40.200:FF:000005">
    <property type="entry name" value="Superoxide dismutase [Cu-Zn]"/>
    <property type="match status" value="1"/>
</dbReference>
<dbReference type="Gene3D" id="2.60.40.200">
    <property type="entry name" value="Superoxide dismutase, copper/zinc binding domain"/>
    <property type="match status" value="1"/>
</dbReference>
<dbReference type="InterPro" id="IPR036423">
    <property type="entry name" value="SOD-like_Cu/Zn_dom_sf"/>
</dbReference>
<dbReference type="InterPro" id="IPR024134">
    <property type="entry name" value="SOD_Cu/Zn_/chaperone"/>
</dbReference>
<dbReference type="InterPro" id="IPR018152">
    <property type="entry name" value="SOD_Cu/Zn_BS"/>
</dbReference>
<dbReference type="InterPro" id="IPR001424">
    <property type="entry name" value="SOD_Cu_Zn_dom"/>
</dbReference>
<dbReference type="PANTHER" id="PTHR10003">
    <property type="entry name" value="SUPEROXIDE DISMUTASE CU-ZN -RELATED"/>
    <property type="match status" value="1"/>
</dbReference>
<dbReference type="Pfam" id="PF00080">
    <property type="entry name" value="Sod_Cu"/>
    <property type="match status" value="1"/>
</dbReference>
<dbReference type="SUPFAM" id="SSF49329">
    <property type="entry name" value="Cu,Zn superoxide dismutase-like"/>
    <property type="match status" value="1"/>
</dbReference>
<dbReference type="PROSITE" id="PS00332">
    <property type="entry name" value="SOD_CU_ZN_2"/>
    <property type="match status" value="1"/>
</dbReference>
<feature type="signal peptide" evidence="2">
    <location>
        <begin position="1"/>
        <end position="20"/>
    </location>
</feature>
<feature type="chain" id="PRO_0000032819" description="Superoxide dismutase [Cu-Zn] 2">
    <location>
        <begin position="21"/>
        <end position="171"/>
    </location>
</feature>
<feature type="binding site" evidence="1">
    <location>
        <position position="67"/>
    </location>
    <ligand>
        <name>Cu cation</name>
        <dbReference type="ChEBI" id="CHEBI:23378"/>
        <note>catalytic</note>
    </ligand>
</feature>
<feature type="binding site" evidence="1">
    <location>
        <position position="69"/>
    </location>
    <ligand>
        <name>Cu cation</name>
        <dbReference type="ChEBI" id="CHEBI:23378"/>
        <note>catalytic</note>
    </ligand>
</feature>
<feature type="binding site" evidence="1">
    <location>
        <position position="85"/>
    </location>
    <ligand>
        <name>Cu cation</name>
        <dbReference type="ChEBI" id="CHEBI:23378"/>
        <note>catalytic</note>
    </ligand>
</feature>
<feature type="binding site" evidence="1">
    <location>
        <position position="85"/>
    </location>
    <ligand>
        <name>Zn(2+)</name>
        <dbReference type="ChEBI" id="CHEBI:29105"/>
        <note>structural</note>
    </ligand>
</feature>
<feature type="binding site" evidence="1">
    <location>
        <position position="93"/>
    </location>
    <ligand>
        <name>Zn(2+)</name>
        <dbReference type="ChEBI" id="CHEBI:29105"/>
        <note>structural</note>
    </ligand>
</feature>
<feature type="binding site" evidence="1">
    <location>
        <position position="102"/>
    </location>
    <ligand>
        <name>Zn(2+)</name>
        <dbReference type="ChEBI" id="CHEBI:29105"/>
        <note>structural</note>
    </ligand>
</feature>
<feature type="binding site" evidence="1">
    <location>
        <position position="105"/>
    </location>
    <ligand>
        <name>Zn(2+)</name>
        <dbReference type="ChEBI" id="CHEBI:29105"/>
        <note>structural</note>
    </ligand>
</feature>
<feature type="binding site" evidence="1">
    <location>
        <position position="147"/>
    </location>
    <ligand>
        <name>Cu cation</name>
        <dbReference type="ChEBI" id="CHEBI:23378"/>
        <note>catalytic</note>
    </ligand>
</feature>
<feature type="disulfide bond" evidence="1">
    <location>
        <begin position="74"/>
        <end position="167"/>
    </location>
</feature>
<gene>
    <name type="primary">sodC2</name>
    <name type="ordered locus">aq_238</name>
</gene>
<keyword id="KW-0049">Antioxidant</keyword>
<keyword id="KW-0186">Copper</keyword>
<keyword id="KW-1015">Disulfide bond</keyword>
<keyword id="KW-0479">Metal-binding</keyword>
<keyword id="KW-0560">Oxidoreductase</keyword>
<keyword id="KW-1185">Reference proteome</keyword>
<keyword id="KW-0732">Signal</keyword>
<keyword id="KW-0862">Zinc</keyword>
<accession>O66602</accession>
<name>SODC2_AQUAE</name>
<sequence length="171" mass="18231">MKKLSGVLAGSLLLISASFSQDLKAHAELINTEGEVIGKAELIETNSGVLIKLNAKGLPPNAELAFHIHERGECKPPTFKSAKGHFNPYGKKHGLLNPEGPHAGDMPNIYTDDKGNVRVQVLNPFVTLKKGEKNSLFKEGGTALVIHSGPDDYKSDPAGNAGKRIACGVIR</sequence>